<comment type="function">
    <text evidence="1">F(1)F(0) ATP synthase produces ATP from ADP in the presence of a proton or sodium gradient. F-type ATPases consist of two structural domains, F(1) containing the extramembraneous catalytic core and F(0) containing the membrane proton channel, linked together by a central stalk and a peripheral stalk. During catalysis, ATP synthesis in the catalytic domain of F(1) is coupled via a rotary mechanism of the central stalk subunits to proton translocation.</text>
</comment>
<comment type="function">
    <text evidence="1">Key component of the F(0) channel; it plays a direct role in translocation across the membrane. A homomeric c-ring of between 10-14 subunits forms the central stalk rotor element with the F(1) delta and epsilon subunits.</text>
</comment>
<comment type="subunit">
    <text evidence="1">F-type ATPases have 2 components, F(1) - the catalytic core - and F(0) - the membrane proton channel. F(1) has five subunits: alpha(3), beta(3), gamma(1), delta(1), epsilon(1). F(0) has three main subunits: a(1), b(2) and c(10-14). The alpha and beta chains form an alternating ring which encloses part of the gamma chain. F(1) is attached to F(0) by a central stalk formed by the gamma and epsilon chains, while a peripheral stalk is formed by the delta and b chains.</text>
</comment>
<comment type="subcellular location">
    <subcellularLocation>
        <location evidence="1">Cell membrane</location>
        <topology evidence="1">Multi-pass membrane protein</topology>
    </subcellularLocation>
</comment>
<comment type="similarity">
    <text evidence="1">Belongs to the ATPase C chain family.</text>
</comment>
<proteinExistence type="inferred from homology"/>
<name>ATPL_ANOFW</name>
<gene>
    <name evidence="1" type="primary">atpE</name>
    <name type="ordered locus">Aflv_2707</name>
</gene>
<keyword id="KW-0066">ATP synthesis</keyword>
<keyword id="KW-1003">Cell membrane</keyword>
<keyword id="KW-0138">CF(0)</keyword>
<keyword id="KW-0375">Hydrogen ion transport</keyword>
<keyword id="KW-0406">Ion transport</keyword>
<keyword id="KW-0446">Lipid-binding</keyword>
<keyword id="KW-0472">Membrane</keyword>
<keyword id="KW-0812">Transmembrane</keyword>
<keyword id="KW-1133">Transmembrane helix</keyword>
<keyword id="KW-0813">Transport</keyword>
<accession>B7GMF8</accession>
<reference key="1">
    <citation type="journal article" date="2008" name="Genome Biol.">
        <title>Encapsulated in silica: genome, proteome and physiology of the thermophilic bacterium Anoxybacillus flavithermus WK1.</title>
        <authorList>
            <person name="Saw J.H."/>
            <person name="Mountain B.W."/>
            <person name="Feng L."/>
            <person name="Omelchenko M.V."/>
            <person name="Hou S."/>
            <person name="Saito J.A."/>
            <person name="Stott M.B."/>
            <person name="Li D."/>
            <person name="Zhao G."/>
            <person name="Wu J."/>
            <person name="Galperin M.Y."/>
            <person name="Koonin E.V."/>
            <person name="Makarova K.S."/>
            <person name="Wolf Y.I."/>
            <person name="Rigden D.J."/>
            <person name="Dunfield P.F."/>
            <person name="Wang L."/>
            <person name="Alam M."/>
        </authorList>
    </citation>
    <scope>NUCLEOTIDE SEQUENCE [LARGE SCALE GENOMIC DNA]</scope>
    <source>
        <strain>DSM 21510 / WK1</strain>
    </source>
</reference>
<evidence type="ECO:0000255" key="1">
    <source>
        <dbReference type="HAMAP-Rule" id="MF_01396"/>
    </source>
</evidence>
<sequence>MGVLAAAIAIGLAALGAGIGNGLIVSRTVEGIARQPEARGMLQTTMFIGVALVEAIPIIAVVIAFMVQGR</sequence>
<feature type="chain" id="PRO_1000184318" description="ATP synthase subunit c">
    <location>
        <begin position="1"/>
        <end position="70"/>
    </location>
</feature>
<feature type="transmembrane region" description="Helical" evidence="1">
    <location>
        <begin position="5"/>
        <end position="25"/>
    </location>
</feature>
<feature type="transmembrane region" description="Helical" evidence="1">
    <location>
        <begin position="47"/>
        <end position="67"/>
    </location>
</feature>
<feature type="site" description="Reversibly protonated during proton transport" evidence="1">
    <location>
        <position position="54"/>
    </location>
</feature>
<protein>
    <recommendedName>
        <fullName evidence="1">ATP synthase subunit c</fullName>
    </recommendedName>
    <alternativeName>
        <fullName evidence="1">ATP synthase F(0) sector subunit c</fullName>
    </alternativeName>
    <alternativeName>
        <fullName evidence="1">F-type ATPase subunit c</fullName>
        <shortName evidence="1">F-ATPase subunit c</shortName>
    </alternativeName>
    <alternativeName>
        <fullName evidence="1">Lipid-binding protein</fullName>
    </alternativeName>
</protein>
<organism>
    <name type="scientific">Anoxybacillus flavithermus (strain DSM 21510 / WK1)</name>
    <dbReference type="NCBI Taxonomy" id="491915"/>
    <lineage>
        <taxon>Bacteria</taxon>
        <taxon>Bacillati</taxon>
        <taxon>Bacillota</taxon>
        <taxon>Bacilli</taxon>
        <taxon>Bacillales</taxon>
        <taxon>Anoxybacillaceae</taxon>
        <taxon>Anoxybacillus</taxon>
    </lineage>
</organism>
<dbReference type="EMBL" id="CP000922">
    <property type="protein sequence ID" value="ACJ35060.1"/>
    <property type="molecule type" value="Genomic_DNA"/>
</dbReference>
<dbReference type="RefSeq" id="WP_003253662.1">
    <property type="nucleotide sequence ID" value="NC_011567.1"/>
</dbReference>
<dbReference type="SMR" id="B7GMF8"/>
<dbReference type="STRING" id="491915.Aflv_2707"/>
<dbReference type="GeneID" id="94898520"/>
<dbReference type="KEGG" id="afl:Aflv_2707"/>
<dbReference type="eggNOG" id="COG0636">
    <property type="taxonomic scope" value="Bacteria"/>
</dbReference>
<dbReference type="HOGENOM" id="CLU_148047_1_1_9"/>
<dbReference type="Proteomes" id="UP000000742">
    <property type="component" value="Chromosome"/>
</dbReference>
<dbReference type="GO" id="GO:0005886">
    <property type="term" value="C:plasma membrane"/>
    <property type="evidence" value="ECO:0007669"/>
    <property type="project" value="UniProtKB-SubCell"/>
</dbReference>
<dbReference type="GO" id="GO:0045259">
    <property type="term" value="C:proton-transporting ATP synthase complex"/>
    <property type="evidence" value="ECO:0007669"/>
    <property type="project" value="UniProtKB-KW"/>
</dbReference>
<dbReference type="GO" id="GO:0033177">
    <property type="term" value="C:proton-transporting two-sector ATPase complex, proton-transporting domain"/>
    <property type="evidence" value="ECO:0007669"/>
    <property type="project" value="InterPro"/>
</dbReference>
<dbReference type="GO" id="GO:0008289">
    <property type="term" value="F:lipid binding"/>
    <property type="evidence" value="ECO:0007669"/>
    <property type="project" value="UniProtKB-KW"/>
</dbReference>
<dbReference type="GO" id="GO:0046933">
    <property type="term" value="F:proton-transporting ATP synthase activity, rotational mechanism"/>
    <property type="evidence" value="ECO:0007669"/>
    <property type="project" value="UniProtKB-UniRule"/>
</dbReference>
<dbReference type="CDD" id="cd18185">
    <property type="entry name" value="ATP-synt_Fo_c_ATPE"/>
    <property type="match status" value="1"/>
</dbReference>
<dbReference type="FunFam" id="1.20.20.10:FF:000004">
    <property type="entry name" value="ATP synthase subunit c"/>
    <property type="match status" value="1"/>
</dbReference>
<dbReference type="Gene3D" id="1.20.20.10">
    <property type="entry name" value="F1F0 ATP synthase subunit C"/>
    <property type="match status" value="1"/>
</dbReference>
<dbReference type="HAMAP" id="MF_01396">
    <property type="entry name" value="ATP_synth_c_bact"/>
    <property type="match status" value="1"/>
</dbReference>
<dbReference type="InterPro" id="IPR005953">
    <property type="entry name" value="ATP_synth_csu_bac/chlpt"/>
</dbReference>
<dbReference type="InterPro" id="IPR000454">
    <property type="entry name" value="ATP_synth_F0_csu"/>
</dbReference>
<dbReference type="InterPro" id="IPR020537">
    <property type="entry name" value="ATP_synth_F0_csu_DDCD_BS"/>
</dbReference>
<dbReference type="InterPro" id="IPR038662">
    <property type="entry name" value="ATP_synth_F0_csu_sf"/>
</dbReference>
<dbReference type="InterPro" id="IPR002379">
    <property type="entry name" value="ATPase_proteolipid_c-like_dom"/>
</dbReference>
<dbReference type="InterPro" id="IPR035921">
    <property type="entry name" value="F/V-ATP_Csub_sf"/>
</dbReference>
<dbReference type="NCBIfam" id="TIGR01260">
    <property type="entry name" value="ATP_synt_c"/>
    <property type="match status" value="1"/>
</dbReference>
<dbReference type="NCBIfam" id="NF005363">
    <property type="entry name" value="PRK06876.1"/>
    <property type="match status" value="1"/>
</dbReference>
<dbReference type="PANTHER" id="PTHR10031">
    <property type="entry name" value="ATP SYNTHASE LIPID-BINDING PROTEIN, MITOCHONDRIAL"/>
    <property type="match status" value="1"/>
</dbReference>
<dbReference type="PANTHER" id="PTHR10031:SF0">
    <property type="entry name" value="ATPASE PROTEIN 9"/>
    <property type="match status" value="1"/>
</dbReference>
<dbReference type="Pfam" id="PF00137">
    <property type="entry name" value="ATP-synt_C"/>
    <property type="match status" value="1"/>
</dbReference>
<dbReference type="PRINTS" id="PR00124">
    <property type="entry name" value="ATPASEC"/>
</dbReference>
<dbReference type="SUPFAM" id="SSF81333">
    <property type="entry name" value="F1F0 ATP synthase subunit C"/>
    <property type="match status" value="1"/>
</dbReference>
<dbReference type="PROSITE" id="PS00605">
    <property type="entry name" value="ATPASE_C"/>
    <property type="match status" value="1"/>
</dbReference>